<reference key="1">
    <citation type="journal article" date="2001" name="Nature">
        <title>Massive gene decay in the leprosy bacillus.</title>
        <authorList>
            <person name="Cole S.T."/>
            <person name="Eiglmeier K."/>
            <person name="Parkhill J."/>
            <person name="James K.D."/>
            <person name="Thomson N.R."/>
            <person name="Wheeler P.R."/>
            <person name="Honore N."/>
            <person name="Garnier T."/>
            <person name="Churcher C.M."/>
            <person name="Harris D.E."/>
            <person name="Mungall K.L."/>
            <person name="Basham D."/>
            <person name="Brown D."/>
            <person name="Chillingworth T."/>
            <person name="Connor R."/>
            <person name="Davies R.M."/>
            <person name="Devlin K."/>
            <person name="Duthoy S."/>
            <person name="Feltwell T."/>
            <person name="Fraser A."/>
            <person name="Hamlin N."/>
            <person name="Holroyd S."/>
            <person name="Hornsby T."/>
            <person name="Jagels K."/>
            <person name="Lacroix C."/>
            <person name="Maclean J."/>
            <person name="Moule S."/>
            <person name="Murphy L.D."/>
            <person name="Oliver K."/>
            <person name="Quail M.A."/>
            <person name="Rajandream M.A."/>
            <person name="Rutherford K.M."/>
            <person name="Rutter S."/>
            <person name="Seeger K."/>
            <person name="Simon S."/>
            <person name="Simmonds M."/>
            <person name="Skelton J."/>
            <person name="Squares R."/>
            <person name="Squares S."/>
            <person name="Stevens K."/>
            <person name="Taylor K."/>
            <person name="Whitehead S."/>
            <person name="Woodward J.R."/>
            <person name="Barrell B.G."/>
        </authorList>
    </citation>
    <scope>NUCLEOTIDE SEQUENCE [LARGE SCALE GENOMIC DNA]</scope>
    <source>
        <strain>TN</strain>
    </source>
</reference>
<proteinExistence type="inferred from homology"/>
<protein>
    <recommendedName>
        <fullName evidence="1">6,7-dimethyl-8-ribityllumazine synthase</fullName>
        <shortName evidence="1">DMRL synthase</shortName>
        <shortName evidence="1">LS</shortName>
        <shortName evidence="1">Lumazine synthase</shortName>
        <ecNumber evidence="1">2.5.1.78</ecNumber>
    </recommendedName>
</protein>
<gene>
    <name evidence="1" type="primary">ribH</name>
    <name type="ordered locus">ML0560</name>
</gene>
<feature type="chain" id="PRO_0000134770" description="6,7-dimethyl-8-ribityllumazine synthase">
    <location>
        <begin position="1"/>
        <end position="160"/>
    </location>
</feature>
<feature type="active site" description="Proton donor" evidence="1">
    <location>
        <position position="89"/>
    </location>
</feature>
<feature type="binding site" evidence="1">
    <location>
        <position position="27"/>
    </location>
    <ligand>
        <name>5-amino-6-(D-ribitylamino)uracil</name>
        <dbReference type="ChEBI" id="CHEBI:15934"/>
    </ligand>
</feature>
<feature type="binding site" evidence="1">
    <location>
        <begin position="59"/>
        <end position="61"/>
    </location>
    <ligand>
        <name>5-amino-6-(D-ribitylamino)uracil</name>
        <dbReference type="ChEBI" id="CHEBI:15934"/>
    </ligand>
</feature>
<feature type="binding site" evidence="1">
    <location>
        <begin position="81"/>
        <end position="83"/>
    </location>
    <ligand>
        <name>5-amino-6-(D-ribitylamino)uracil</name>
        <dbReference type="ChEBI" id="CHEBI:15934"/>
    </ligand>
</feature>
<feature type="binding site" evidence="1">
    <location>
        <begin position="86"/>
        <end position="87"/>
    </location>
    <ligand>
        <name>(2S)-2-hydroxy-3-oxobutyl phosphate</name>
        <dbReference type="ChEBI" id="CHEBI:58830"/>
    </ligand>
</feature>
<feature type="binding site" evidence="1">
    <location>
        <position position="114"/>
    </location>
    <ligand>
        <name>5-amino-6-(D-ribitylamino)uracil</name>
        <dbReference type="ChEBI" id="CHEBI:15934"/>
    </ligand>
</feature>
<feature type="binding site" evidence="1">
    <location>
        <position position="128"/>
    </location>
    <ligand>
        <name>(2S)-2-hydroxy-3-oxobutyl phosphate</name>
        <dbReference type="ChEBI" id="CHEBI:58830"/>
    </ligand>
</feature>
<organism>
    <name type="scientific">Mycobacterium leprae (strain TN)</name>
    <dbReference type="NCBI Taxonomy" id="272631"/>
    <lineage>
        <taxon>Bacteria</taxon>
        <taxon>Bacillati</taxon>
        <taxon>Actinomycetota</taxon>
        <taxon>Actinomycetes</taxon>
        <taxon>Mycobacteriales</taxon>
        <taxon>Mycobacteriaceae</taxon>
        <taxon>Mycobacterium</taxon>
    </lineage>
</organism>
<name>RISB_MYCLE</name>
<evidence type="ECO:0000255" key="1">
    <source>
        <dbReference type="HAMAP-Rule" id="MF_00178"/>
    </source>
</evidence>
<accession>Q9CCP3</accession>
<keyword id="KW-1185">Reference proteome</keyword>
<keyword id="KW-0686">Riboflavin biosynthesis</keyword>
<keyword id="KW-0808">Transferase</keyword>
<sequence>MSGGAGIPEVPGIDASGLRLGIVASTWHSRICDALLAGARKVAADSGIDGPTVVRVLGAIEIPVVVQELARHHDAVVALGVVIRGDTPHFDYVCNSVTQGLTRIALDTSTPVGNGVLTTNTEKQALDRAGLPTSAEDKGAQAAAAALTTALTLLNLRSRI</sequence>
<dbReference type="EC" id="2.5.1.78" evidence="1"/>
<dbReference type="EMBL" id="AL583918">
    <property type="protein sequence ID" value="CAC30068.1"/>
    <property type="molecule type" value="Genomic_DNA"/>
</dbReference>
<dbReference type="PIR" id="H86978">
    <property type="entry name" value="H86978"/>
</dbReference>
<dbReference type="RefSeq" id="NP_301474.1">
    <property type="nucleotide sequence ID" value="NC_002677.1"/>
</dbReference>
<dbReference type="RefSeq" id="WP_010907798.1">
    <property type="nucleotide sequence ID" value="NC_002677.1"/>
</dbReference>
<dbReference type="SMR" id="Q9CCP3"/>
<dbReference type="STRING" id="272631.gene:17574381"/>
<dbReference type="KEGG" id="mle:ML0560"/>
<dbReference type="PATRIC" id="fig|272631.5.peg.971"/>
<dbReference type="Leproma" id="ML0560"/>
<dbReference type="eggNOG" id="COG0054">
    <property type="taxonomic scope" value="Bacteria"/>
</dbReference>
<dbReference type="HOGENOM" id="CLU_089358_1_2_11"/>
<dbReference type="OrthoDB" id="9809709at2"/>
<dbReference type="BRENDA" id="2.5.1.78">
    <property type="organism ID" value="3504"/>
</dbReference>
<dbReference type="UniPathway" id="UPA00275">
    <property type="reaction ID" value="UER00404"/>
</dbReference>
<dbReference type="Proteomes" id="UP000000806">
    <property type="component" value="Chromosome"/>
</dbReference>
<dbReference type="GO" id="GO:0005829">
    <property type="term" value="C:cytosol"/>
    <property type="evidence" value="ECO:0007669"/>
    <property type="project" value="TreeGrafter"/>
</dbReference>
<dbReference type="GO" id="GO:0009349">
    <property type="term" value="C:riboflavin synthase complex"/>
    <property type="evidence" value="ECO:0007669"/>
    <property type="project" value="InterPro"/>
</dbReference>
<dbReference type="GO" id="GO:0000906">
    <property type="term" value="F:6,7-dimethyl-8-ribityllumazine synthase activity"/>
    <property type="evidence" value="ECO:0007669"/>
    <property type="project" value="UniProtKB-UniRule"/>
</dbReference>
<dbReference type="GO" id="GO:0009231">
    <property type="term" value="P:riboflavin biosynthetic process"/>
    <property type="evidence" value="ECO:0007669"/>
    <property type="project" value="UniProtKB-UniRule"/>
</dbReference>
<dbReference type="CDD" id="cd09209">
    <property type="entry name" value="Lumazine_synthase-I"/>
    <property type="match status" value="1"/>
</dbReference>
<dbReference type="Gene3D" id="3.40.50.960">
    <property type="entry name" value="Lumazine/riboflavin synthase"/>
    <property type="match status" value="1"/>
</dbReference>
<dbReference type="HAMAP" id="MF_00178">
    <property type="entry name" value="Lumazine_synth"/>
    <property type="match status" value="1"/>
</dbReference>
<dbReference type="InterPro" id="IPR034964">
    <property type="entry name" value="LS"/>
</dbReference>
<dbReference type="InterPro" id="IPR002180">
    <property type="entry name" value="LS/RS"/>
</dbReference>
<dbReference type="InterPro" id="IPR036467">
    <property type="entry name" value="LS/RS_sf"/>
</dbReference>
<dbReference type="NCBIfam" id="TIGR00114">
    <property type="entry name" value="lumazine-synth"/>
    <property type="match status" value="1"/>
</dbReference>
<dbReference type="PANTHER" id="PTHR21058:SF0">
    <property type="entry name" value="6,7-DIMETHYL-8-RIBITYLLUMAZINE SYNTHASE"/>
    <property type="match status" value="1"/>
</dbReference>
<dbReference type="PANTHER" id="PTHR21058">
    <property type="entry name" value="6,7-DIMETHYL-8-RIBITYLLUMAZINE SYNTHASE DMRL SYNTHASE LUMAZINE SYNTHASE"/>
    <property type="match status" value="1"/>
</dbReference>
<dbReference type="Pfam" id="PF00885">
    <property type="entry name" value="DMRL_synthase"/>
    <property type="match status" value="1"/>
</dbReference>
<dbReference type="SUPFAM" id="SSF52121">
    <property type="entry name" value="Lumazine synthase"/>
    <property type="match status" value="1"/>
</dbReference>
<comment type="function">
    <text evidence="1">Catalyzes the formation of 6,7-dimethyl-8-ribityllumazine by condensation of 5-amino-6-(D-ribitylamino)uracil with 3,4-dihydroxy-2-butanone 4-phosphate. This is the penultimate step in the biosynthesis of riboflavin.</text>
</comment>
<comment type="catalytic activity">
    <reaction evidence="1">
        <text>(2S)-2-hydroxy-3-oxobutyl phosphate + 5-amino-6-(D-ribitylamino)uracil = 6,7-dimethyl-8-(1-D-ribityl)lumazine + phosphate + 2 H2O + H(+)</text>
        <dbReference type="Rhea" id="RHEA:26152"/>
        <dbReference type="ChEBI" id="CHEBI:15377"/>
        <dbReference type="ChEBI" id="CHEBI:15378"/>
        <dbReference type="ChEBI" id="CHEBI:15934"/>
        <dbReference type="ChEBI" id="CHEBI:43474"/>
        <dbReference type="ChEBI" id="CHEBI:58201"/>
        <dbReference type="ChEBI" id="CHEBI:58830"/>
        <dbReference type="EC" id="2.5.1.78"/>
    </reaction>
</comment>
<comment type="pathway">
    <text evidence="1">Cofactor biosynthesis; riboflavin biosynthesis; riboflavin from 2-hydroxy-3-oxobutyl phosphate and 5-amino-6-(D-ribitylamino)uracil: step 1/2.</text>
</comment>
<comment type="subunit">
    <text evidence="1">Homopentamer.</text>
</comment>
<comment type="similarity">
    <text evidence="1">Belongs to the DMRL synthase family.</text>
</comment>